<comment type="function">
    <text>Guanine nucleotide-binding proteins (G proteins) are involved as modulators or transducers in various transmembrane signaling systems.</text>
</comment>
<comment type="subunit">
    <text>G proteins are composed of 3 units; alpha, beta and gamma. The alpha chain contains the guanine nucleotide binding site.</text>
</comment>
<comment type="similarity">
    <text evidence="4">Belongs to the G-alpha family.</text>
</comment>
<proteinExistence type="evidence at transcript level"/>
<sequence>MGALCSSETYMLDKEEYKKQVEHNKSIENDLEKDRKIKILKLLILGPGESGKSTTIKQIKIIHDEGYSAEEKMVRKHGIYMNILEGIEEIHLSVGRENKSYKNPLSFDHINEVRMFTENFKKADDSEKLLGPEVINAIQKYIKDETIAMMLRDKTVYNIDDSTIYFLENFSRIIQKDYLPTEEDILKSRVPTSGVIQYKIMLKNFNFRIFDVGGQRAQRRKWLHVFDDVQAVLFITSLSEYDQVLREDATVNRMKESLNLFEKICNGRYFLNTAMILFLNKIDLFKIKIKHTNITVALTSYKGPQECDSALDYIRKRFISLNKNKKRSIYEHVTCATDTEQIQVVIDSVIDVVIQHTMQKVGIQ</sequence>
<protein>
    <recommendedName>
        <fullName>Guanine nucleotide-binding protein alpha-8 subunit</fullName>
    </recommendedName>
</protein>
<organism>
    <name type="scientific">Caenorhabditis elegans</name>
    <dbReference type="NCBI Taxonomy" id="6239"/>
    <lineage>
        <taxon>Eukaryota</taxon>
        <taxon>Metazoa</taxon>
        <taxon>Ecdysozoa</taxon>
        <taxon>Nematoda</taxon>
        <taxon>Chromadorea</taxon>
        <taxon>Rhabditida</taxon>
        <taxon>Rhabditina</taxon>
        <taxon>Rhabditomorpha</taxon>
        <taxon>Rhabditoidea</taxon>
        <taxon>Rhabditidae</taxon>
        <taxon>Peloderinae</taxon>
        <taxon>Caenorhabditis</taxon>
    </lineage>
</organism>
<reference key="1">
    <citation type="submission" date="2000-09" db="EMBL/GenBank/DDBJ databases">
        <title>Interaction analysis of the complete G-alpha subfamily of heterotrimeric G proteins from Caenorhabditis elegans.</title>
        <authorList>
            <person name="Cuppen E."/>
            <person name="Jansen G."/>
            <person name="Plasterk R.H.A."/>
        </authorList>
    </citation>
    <scope>NUCLEOTIDE SEQUENCE [MRNA]</scope>
    <source>
        <strain>Bristol N2</strain>
    </source>
</reference>
<reference key="2">
    <citation type="journal article" date="1998" name="Science">
        <title>Genome sequence of the nematode C. elegans: a platform for investigating biology.</title>
        <authorList>
            <consortium name="The C. elegans sequencing consortium"/>
        </authorList>
    </citation>
    <scope>NUCLEOTIDE SEQUENCE [LARGE SCALE GENOMIC DNA]</scope>
    <source>
        <strain>Bristol N2</strain>
    </source>
</reference>
<reference key="3">
    <citation type="journal article" date="1999" name="Nat. Genet.">
        <title>The complete family of genes encoding G proteins of Caenorhabditis elegans.</title>
        <authorList>
            <person name="Jansen G."/>
            <person name="Thijssen K.L."/>
            <person name="Werner P."/>
            <person name="van der Horst M."/>
            <person name="Hazendonk E."/>
            <person name="Plasterk R.H.A."/>
        </authorList>
    </citation>
    <scope>GENE FAMILY</scope>
    <scope>NOMENCLATURE</scope>
</reference>
<name>GPA8_CAEEL</name>
<feature type="initiator methionine" description="Removed" evidence="2">
    <location>
        <position position="1"/>
    </location>
</feature>
<feature type="chain" id="PRO_0000203643" description="Guanine nucleotide-binding protein alpha-8 subunit">
    <location>
        <begin position="2"/>
        <end position="364"/>
    </location>
</feature>
<feature type="domain" description="G-alpha" evidence="3">
    <location>
        <begin position="38"/>
        <end position="364"/>
    </location>
</feature>
<feature type="region of interest" description="G1 motif" evidence="3">
    <location>
        <begin position="41"/>
        <end position="54"/>
    </location>
</feature>
<feature type="region of interest" description="G2 motif" evidence="3">
    <location>
        <begin position="184"/>
        <end position="192"/>
    </location>
</feature>
<feature type="region of interest" description="G3 motif" evidence="3">
    <location>
        <begin position="207"/>
        <end position="216"/>
    </location>
</feature>
<feature type="region of interest" description="G4 motif" evidence="3">
    <location>
        <begin position="276"/>
        <end position="283"/>
    </location>
</feature>
<feature type="region of interest" description="G5 motif" evidence="3">
    <location>
        <begin position="334"/>
        <end position="339"/>
    </location>
</feature>
<feature type="binding site" evidence="1">
    <location>
        <begin position="46"/>
        <end position="53"/>
    </location>
    <ligand>
        <name>GTP</name>
        <dbReference type="ChEBI" id="CHEBI:37565"/>
    </ligand>
</feature>
<feature type="binding site" evidence="1">
    <location>
        <position position="53"/>
    </location>
    <ligand>
        <name>Mg(2+)</name>
        <dbReference type="ChEBI" id="CHEBI:18420"/>
    </ligand>
</feature>
<feature type="binding site" evidence="1">
    <location>
        <begin position="186"/>
        <end position="192"/>
    </location>
    <ligand>
        <name>GTP</name>
        <dbReference type="ChEBI" id="CHEBI:37565"/>
    </ligand>
</feature>
<feature type="binding site" evidence="1">
    <location>
        <position position="192"/>
    </location>
    <ligand>
        <name>Mg(2+)</name>
        <dbReference type="ChEBI" id="CHEBI:18420"/>
    </ligand>
</feature>
<feature type="binding site" evidence="1">
    <location>
        <begin position="211"/>
        <end position="215"/>
    </location>
    <ligand>
        <name>GTP</name>
        <dbReference type="ChEBI" id="CHEBI:37565"/>
    </ligand>
</feature>
<feature type="binding site" evidence="1">
    <location>
        <begin position="280"/>
        <end position="283"/>
    </location>
    <ligand>
        <name>GTP</name>
        <dbReference type="ChEBI" id="CHEBI:37565"/>
    </ligand>
</feature>
<feature type="binding site" evidence="1">
    <location>
        <position position="336"/>
    </location>
    <ligand>
        <name>GTP</name>
        <dbReference type="ChEBI" id="CHEBI:37565"/>
    </ligand>
</feature>
<feature type="lipid moiety-binding region" description="N-myristoyl glycine" evidence="2">
    <location>
        <position position="2"/>
    </location>
</feature>
<feature type="lipid moiety-binding region" description="S-palmitoyl cysteine" evidence="2">
    <location>
        <position position="5"/>
    </location>
</feature>
<gene>
    <name type="primary">gpa-8</name>
    <name type="ORF">F56H9.3</name>
</gene>
<evidence type="ECO:0000250" key="1"/>
<evidence type="ECO:0000255" key="2"/>
<evidence type="ECO:0000255" key="3">
    <source>
        <dbReference type="PROSITE-ProRule" id="PRU01230"/>
    </source>
</evidence>
<evidence type="ECO:0000305" key="4"/>
<keyword id="KW-0342">GTP-binding</keyword>
<keyword id="KW-0449">Lipoprotein</keyword>
<keyword id="KW-0460">Magnesium</keyword>
<keyword id="KW-0479">Metal-binding</keyword>
<keyword id="KW-0519">Myristate</keyword>
<keyword id="KW-0547">Nucleotide-binding</keyword>
<keyword id="KW-0564">Palmitate</keyword>
<keyword id="KW-1185">Reference proteome</keyword>
<keyword id="KW-0807">Transducer</keyword>
<dbReference type="EMBL" id="AY008131">
    <property type="protein sequence ID" value="AAG32084.1"/>
    <property type="molecule type" value="mRNA"/>
</dbReference>
<dbReference type="EMBL" id="Z74473">
    <property type="protein sequence ID" value="CAA98948.1"/>
    <property type="molecule type" value="Genomic_DNA"/>
</dbReference>
<dbReference type="PIR" id="T22807">
    <property type="entry name" value="T22807"/>
</dbReference>
<dbReference type="RefSeq" id="NP_506160.1">
    <property type="nucleotide sequence ID" value="NM_073759.4"/>
</dbReference>
<dbReference type="SMR" id="Q20907"/>
<dbReference type="FunCoup" id="Q20907">
    <property type="interactions" value="26"/>
</dbReference>
<dbReference type="STRING" id="6239.F56H9.3.1"/>
<dbReference type="PaxDb" id="6239-F56H9.3"/>
<dbReference type="PeptideAtlas" id="Q20907"/>
<dbReference type="EnsemblMetazoa" id="F56H9.3.1">
    <property type="protein sequence ID" value="F56H9.3.1"/>
    <property type="gene ID" value="WBGene00001670"/>
</dbReference>
<dbReference type="GeneID" id="179731"/>
<dbReference type="KEGG" id="cel:CELE_F56H9.3"/>
<dbReference type="UCSC" id="F56H9.3">
    <property type="organism name" value="c. elegans"/>
</dbReference>
<dbReference type="AGR" id="WB:WBGene00001670"/>
<dbReference type="CTD" id="179731"/>
<dbReference type="WormBase" id="F56H9.3">
    <property type="protein sequence ID" value="CE05973"/>
    <property type="gene ID" value="WBGene00001670"/>
    <property type="gene designation" value="gpa-8"/>
</dbReference>
<dbReference type="eggNOG" id="KOG0082">
    <property type="taxonomic scope" value="Eukaryota"/>
</dbReference>
<dbReference type="GeneTree" id="ENSGT00970000196357"/>
<dbReference type="HOGENOM" id="CLU_014184_6_0_1"/>
<dbReference type="InParanoid" id="Q20907"/>
<dbReference type="OMA" id="GRENKSY"/>
<dbReference type="OrthoDB" id="5817230at2759"/>
<dbReference type="PhylomeDB" id="Q20907"/>
<dbReference type="PRO" id="PR:Q20907"/>
<dbReference type="Proteomes" id="UP000001940">
    <property type="component" value="Chromosome V"/>
</dbReference>
<dbReference type="GO" id="GO:0005737">
    <property type="term" value="C:cytoplasm"/>
    <property type="evidence" value="ECO:0000318"/>
    <property type="project" value="GO_Central"/>
</dbReference>
<dbReference type="GO" id="GO:0005834">
    <property type="term" value="C:heterotrimeric G-protein complex"/>
    <property type="evidence" value="ECO:0000318"/>
    <property type="project" value="GO_Central"/>
</dbReference>
<dbReference type="GO" id="GO:0001664">
    <property type="term" value="F:G protein-coupled receptor binding"/>
    <property type="evidence" value="ECO:0000318"/>
    <property type="project" value="GO_Central"/>
</dbReference>
<dbReference type="GO" id="GO:0031683">
    <property type="term" value="F:G-protein beta/gamma-subunit complex binding"/>
    <property type="evidence" value="ECO:0000318"/>
    <property type="project" value="GO_Central"/>
</dbReference>
<dbReference type="GO" id="GO:0005525">
    <property type="term" value="F:GTP binding"/>
    <property type="evidence" value="ECO:0007669"/>
    <property type="project" value="UniProtKB-KW"/>
</dbReference>
<dbReference type="GO" id="GO:0003924">
    <property type="term" value="F:GTPase activity"/>
    <property type="evidence" value="ECO:0000318"/>
    <property type="project" value="GO_Central"/>
</dbReference>
<dbReference type="GO" id="GO:0046872">
    <property type="term" value="F:metal ion binding"/>
    <property type="evidence" value="ECO:0007669"/>
    <property type="project" value="UniProtKB-KW"/>
</dbReference>
<dbReference type="GO" id="GO:0007188">
    <property type="term" value="P:adenylate cyclase-modulating G protein-coupled receptor signaling pathway"/>
    <property type="evidence" value="ECO:0000318"/>
    <property type="project" value="GO_Central"/>
</dbReference>
<dbReference type="CDD" id="cd00066">
    <property type="entry name" value="G-alpha"/>
    <property type="match status" value="1"/>
</dbReference>
<dbReference type="FunFam" id="1.10.400.10:FF:000022">
    <property type="entry name" value="Guanine nucleotide-binding protein alpha-8 subunit"/>
    <property type="match status" value="1"/>
</dbReference>
<dbReference type="FunFam" id="3.40.50.300:FF:000051">
    <property type="entry name" value="Guanine nucleotide-binding protein subunit alpha"/>
    <property type="match status" value="1"/>
</dbReference>
<dbReference type="Gene3D" id="1.10.400.10">
    <property type="entry name" value="GI Alpha 1, domain 2-like"/>
    <property type="match status" value="1"/>
</dbReference>
<dbReference type="Gene3D" id="3.40.50.300">
    <property type="entry name" value="P-loop containing nucleotide triphosphate hydrolases"/>
    <property type="match status" value="1"/>
</dbReference>
<dbReference type="InterPro" id="IPR001019">
    <property type="entry name" value="Gprotein_alpha_su"/>
</dbReference>
<dbReference type="InterPro" id="IPR011025">
    <property type="entry name" value="GproteinA_insert"/>
</dbReference>
<dbReference type="InterPro" id="IPR027417">
    <property type="entry name" value="P-loop_NTPase"/>
</dbReference>
<dbReference type="PANTHER" id="PTHR10218">
    <property type="entry name" value="GTP-BINDING PROTEIN ALPHA SUBUNIT"/>
    <property type="match status" value="1"/>
</dbReference>
<dbReference type="PANTHER" id="PTHR10218:SF196">
    <property type="entry name" value="GUANINE NUCLEOTIDE-BINDING PROTEIN ALPHA-8 SUBUNIT"/>
    <property type="match status" value="1"/>
</dbReference>
<dbReference type="Pfam" id="PF00503">
    <property type="entry name" value="G-alpha"/>
    <property type="match status" value="1"/>
</dbReference>
<dbReference type="PRINTS" id="PR00318">
    <property type="entry name" value="GPROTEINA"/>
</dbReference>
<dbReference type="SMART" id="SM00275">
    <property type="entry name" value="G_alpha"/>
    <property type="match status" value="1"/>
</dbReference>
<dbReference type="SUPFAM" id="SSF52540">
    <property type="entry name" value="P-loop containing nucleoside triphosphate hydrolases"/>
    <property type="match status" value="1"/>
</dbReference>
<dbReference type="SUPFAM" id="SSF47895">
    <property type="entry name" value="Transducin (alpha subunit), insertion domain"/>
    <property type="match status" value="1"/>
</dbReference>
<dbReference type="PROSITE" id="PS51882">
    <property type="entry name" value="G_ALPHA"/>
    <property type="match status" value="1"/>
</dbReference>
<accession>Q20907</accession>